<keyword id="KW-0009">Actin-binding</keyword>
<keyword id="KW-1185">Reference proteome</keyword>
<feature type="chain" id="PRO_0000453734" description="WASH complex subunit homolog 1">
    <location>
        <begin position="1"/>
        <end position="497"/>
    </location>
</feature>
<feature type="domain" description="WH2" evidence="2">
    <location>
        <begin position="390"/>
        <end position="412"/>
    </location>
</feature>
<feature type="region of interest" description="Disordered" evidence="3">
    <location>
        <begin position="306"/>
        <end position="497"/>
    </location>
</feature>
<feature type="compositionally biased region" description="Pro residues" evidence="3">
    <location>
        <begin position="323"/>
        <end position="339"/>
    </location>
</feature>
<feature type="compositionally biased region" description="Low complexity" evidence="3">
    <location>
        <begin position="341"/>
        <end position="350"/>
    </location>
</feature>
<feature type="compositionally biased region" description="Pro residues" evidence="3">
    <location>
        <begin position="351"/>
        <end position="372"/>
    </location>
</feature>
<dbReference type="EMBL" id="BX284602">
    <property type="protein sequence ID" value="CAB07688.1"/>
    <property type="molecule type" value="Genomic_DNA"/>
</dbReference>
<dbReference type="PIR" id="T27012">
    <property type="entry name" value="T27012"/>
</dbReference>
<dbReference type="RefSeq" id="NP_496847.1">
    <property type="nucleotide sequence ID" value="NM_064446.5"/>
</dbReference>
<dbReference type="SMR" id="O18195"/>
<dbReference type="ComplexPortal" id="CPX-4305">
    <property type="entry name" value="DHIC complex"/>
</dbReference>
<dbReference type="DIP" id="DIP-26697N"/>
<dbReference type="FunCoup" id="O18195">
    <property type="interactions" value="1001"/>
</dbReference>
<dbReference type="IntAct" id="O18195">
    <property type="interactions" value="4"/>
</dbReference>
<dbReference type="STRING" id="6239.Y48E1B.1.1"/>
<dbReference type="PaxDb" id="6239-Y48E1B.1"/>
<dbReference type="PeptideAtlas" id="O18195"/>
<dbReference type="EnsemblMetazoa" id="Y48E1B.1.1">
    <property type="protein sequence ID" value="Y48E1B.1.1"/>
    <property type="gene ID" value="WBGene00013000"/>
</dbReference>
<dbReference type="GeneID" id="190025"/>
<dbReference type="KEGG" id="cel:CELE_Y48E1B.1"/>
<dbReference type="UCSC" id="Y48E1B.1">
    <property type="organism name" value="c. elegans"/>
</dbReference>
<dbReference type="AGR" id="WB:WBGene00013000"/>
<dbReference type="CTD" id="190025"/>
<dbReference type="WormBase" id="Y48E1B.1">
    <property type="protein sequence ID" value="CE14854"/>
    <property type="gene ID" value="WBGene00013000"/>
    <property type="gene designation" value="ddl-2"/>
</dbReference>
<dbReference type="eggNOG" id="ENOG502QSX3">
    <property type="taxonomic scope" value="Eukaryota"/>
</dbReference>
<dbReference type="GeneTree" id="ENSGT00390000016717"/>
<dbReference type="HOGENOM" id="CLU_551222_0_0_1"/>
<dbReference type="InParanoid" id="O18195"/>
<dbReference type="OMA" id="PNLKGHA"/>
<dbReference type="OrthoDB" id="307871at2759"/>
<dbReference type="Reactome" id="R-CEL-2029482">
    <property type="pathway name" value="Regulation of actin dynamics for phagocytic cup formation"/>
</dbReference>
<dbReference type="Reactome" id="R-CEL-5663213">
    <property type="pathway name" value="RHO GTPases Activate WASPs and WAVEs"/>
</dbReference>
<dbReference type="PRO" id="PR:O18195"/>
<dbReference type="Proteomes" id="UP000001940">
    <property type="component" value="Chromosome II"/>
</dbReference>
<dbReference type="Bgee" id="WBGene00013000">
    <property type="expression patterns" value="Expressed in pharyngeal muscle cell (C elegans) and 3 other cell types or tissues"/>
</dbReference>
<dbReference type="GO" id="GO:0005829">
    <property type="term" value="C:cytosol"/>
    <property type="evidence" value="ECO:0007669"/>
    <property type="project" value="GOC"/>
</dbReference>
<dbReference type="GO" id="GO:0005769">
    <property type="term" value="C:early endosome"/>
    <property type="evidence" value="ECO:0000318"/>
    <property type="project" value="GO_Central"/>
</dbReference>
<dbReference type="GO" id="GO:0055037">
    <property type="term" value="C:recycling endosome"/>
    <property type="evidence" value="ECO:0000318"/>
    <property type="project" value="GO_Central"/>
</dbReference>
<dbReference type="GO" id="GO:0071203">
    <property type="term" value="C:WASH complex"/>
    <property type="evidence" value="ECO:0000318"/>
    <property type="project" value="GO_Central"/>
</dbReference>
<dbReference type="GO" id="GO:0003779">
    <property type="term" value="F:actin binding"/>
    <property type="evidence" value="ECO:0007669"/>
    <property type="project" value="UniProtKB-KW"/>
</dbReference>
<dbReference type="GO" id="GO:0043014">
    <property type="term" value="F:alpha-tubulin binding"/>
    <property type="evidence" value="ECO:0000318"/>
    <property type="project" value="GO_Central"/>
</dbReference>
<dbReference type="GO" id="GO:0043015">
    <property type="term" value="F:gamma-tubulin binding"/>
    <property type="evidence" value="ECO:0000318"/>
    <property type="project" value="GO_Central"/>
</dbReference>
<dbReference type="GO" id="GO:0034314">
    <property type="term" value="P:Arp2/3 complex-mediated actin nucleation"/>
    <property type="evidence" value="ECO:0000318"/>
    <property type="project" value="GO_Central"/>
</dbReference>
<dbReference type="GO" id="GO:0008340">
    <property type="term" value="P:determination of adult lifespan"/>
    <property type="evidence" value="ECO:0000315"/>
    <property type="project" value="WormBase"/>
</dbReference>
<dbReference type="GO" id="GO:0032456">
    <property type="term" value="P:endocytic recycling"/>
    <property type="evidence" value="ECO:0000318"/>
    <property type="project" value="GO_Central"/>
</dbReference>
<dbReference type="GO" id="GO:0006887">
    <property type="term" value="P:exocytosis"/>
    <property type="evidence" value="ECO:0000318"/>
    <property type="project" value="GO_Central"/>
</dbReference>
<dbReference type="GO" id="GO:0010468">
    <property type="term" value="P:regulation of gene expression"/>
    <property type="evidence" value="ECO:0000303"/>
    <property type="project" value="ComplexPortal"/>
</dbReference>
<dbReference type="GO" id="GO:0042147">
    <property type="term" value="P:retrograde transport, endosome to Golgi"/>
    <property type="evidence" value="ECO:0000318"/>
    <property type="project" value="GO_Central"/>
</dbReference>
<dbReference type="InterPro" id="IPR028290">
    <property type="entry name" value="WASH1"/>
</dbReference>
<dbReference type="InterPro" id="IPR021854">
    <property type="entry name" value="WASH1_WAHD"/>
</dbReference>
<dbReference type="PANTHER" id="PTHR23331">
    <property type="entry name" value="CXYORF1"/>
    <property type="match status" value="1"/>
</dbReference>
<dbReference type="PANTHER" id="PTHR23331:SF1">
    <property type="entry name" value="WASH COMPLEX SUBUNIT 1"/>
    <property type="match status" value="1"/>
</dbReference>
<dbReference type="Pfam" id="PF11945">
    <property type="entry name" value="WASH_WAHD"/>
    <property type="match status" value="1"/>
</dbReference>
<sequence length="497" mass="54580">MYHVPLIPRDAGREETIFRINQSLQKLLRVSDEIFDRVEHRITRIHGKAEAIDRRTEVLEKKLESLQESDKVITFTLPRQLPKLPEEPPTSTSLFRINIDTEHFPGSEELPAFRRADDHVLRPCEPIDFTYELNKPDKFFLTSQVLKEYEQKGWERYKKRLLGGLRELSRSPEHIAELFYAGTSIPAFEGVSGDFSKKALDADDDGGTSRSGRTTDELAQLRLHEQLLEDTALSSTLMQEDSLDDNHPLAFRINFNEKKKKTAKMVEMPDSLPNLKGHAHDFTLRDPEIDEDRLLDILPADDQIPEASEPTEAEADAPTTFILPPPPPPMKLDPSPQPAATPVEITEIPPIISPPAPPPPPPPPPPPPPPQTPSASSSVTFSPTKSVDGGRSDLMAAIRAAGGAGNAKLSRIAEKPKRKGKFDGILESSALLGASETPRNSAPAPDGGGGGGDLMSALSKALDARRKAINGKVEAQPPAKVSSTIPAPPNFDDEEWD</sequence>
<evidence type="ECO:0000250" key="1">
    <source>
        <dbReference type="UniProtKB" id="A8K0Z3"/>
    </source>
</evidence>
<evidence type="ECO:0000255" key="2">
    <source>
        <dbReference type="PROSITE-ProRule" id="PRU00406"/>
    </source>
</evidence>
<evidence type="ECO:0000256" key="3">
    <source>
        <dbReference type="SAM" id="MobiDB-lite"/>
    </source>
</evidence>
<evidence type="ECO:0000269" key="4">
    <source>
    </source>
</evidence>
<evidence type="ECO:0000305" key="5"/>
<evidence type="ECO:0000312" key="6">
    <source>
        <dbReference type="Proteomes" id="UP000001940"/>
    </source>
</evidence>
<evidence type="ECO:0000312" key="7">
    <source>
        <dbReference type="WormBase" id="Y48E1B.1"/>
    </source>
</evidence>
<protein>
    <recommendedName>
        <fullName evidence="1">WASH complex subunit homolog 1</fullName>
    </recommendedName>
</protein>
<gene>
    <name evidence="7" type="primary">ddl-2</name>
    <name evidence="7" type="ORF">Y48E1B.1</name>
</gene>
<accession>O18195</accession>
<comment type="function">
    <text evidence="1 4">Acts as a component of the WASH core complex that functions as a nucleation-promoting factor (NPF) at the surface of endosomes, where it recruits and activates the Arp2/3 complex to induce actin polymerization, playing a key role in the fission of tubules that serve as transport intermediates during endosome sorting (By similarity). Acts as a component of the DHIC (ddl-1-containing hsf-1 inhibitory complex) which modulates lifespan by sequestering the heat shock transcription factor hsf-1 to negatively regulate its binding to DNA and its transcriptional activity (PubMed:22265419).</text>
</comment>
<comment type="subunit">
    <text evidence="1 4">Component of the WASH core complex (By similarity). Component of the DHIC (ddl-1-containing hsf-1 inhibitory) complex, which contains at least ddl-1, ddl-2, hsb-1 and hsf-1 (PubMed:22265419). Within the complex, interacts with ddl-1 (PubMed:22265419). Formation of the DHIC may be dependent upon the Insulin/IGF-1-like signaling (IIS) mediated pathway (PubMed:22265419).</text>
</comment>
<comment type="interaction">
    <interactant intactId="EBI-313368">
        <id>O18195</id>
    </interactant>
    <interactant intactId="EBI-323542">
        <id>O01901</id>
        <label>ddl-1</label>
    </interactant>
    <organismsDiffer>false</organismsDiffer>
    <experiments>6</experiments>
</comment>
<comment type="interaction">
    <interactant intactId="EBI-313368">
        <id>O18195</id>
    </interactant>
    <interactant intactId="EBI-325337">
        <id>G5EC32</id>
        <label>sorb-1</label>
    </interactant>
    <organismsDiffer>false</organismsDiffer>
    <experiments>6</experiments>
</comment>
<comment type="tissue specificity">
    <text evidence="4">Expressed in several neurons located throughout the body.</text>
</comment>
<comment type="disruption phenotype">
    <text evidence="4">RNAi-mediated knockdown positively modulates lifespan; effect abolished in hsf-1 mutant background (PubMed:22265419). Increases resistance to both heat and oxidative stresses (PubMed:22265419). Increases localization to the nucleus and also DNA binding activity of heat-shock transcription factor hsf-1 after heat shock (PubMed:22265419). Increases in transcript levels of heat shock protein genes sim-1, hsp-70, hsp-16.2 and F44E5.5 after heat shock, but not in unstressed conditions (PubMed:22265419). May also moderately decrease levels of post-translationally modified hsf-1 under heat stressed conditions (PubMed:22265419).</text>
</comment>
<comment type="similarity">
    <text evidence="5">Belongs to the WASH1 family.</text>
</comment>
<proteinExistence type="evidence at protein level"/>
<reference evidence="6" key="1">
    <citation type="journal article" date="1998" name="Science">
        <title>Genome sequence of the nematode C. elegans: a platform for investigating biology.</title>
        <authorList>
            <consortium name="The C. elegans sequencing consortium"/>
        </authorList>
    </citation>
    <scope>NUCLEOTIDE SEQUENCE [LARGE SCALE GENOMIC DNA]</scope>
    <source>
        <strain evidence="6">Bristol N2</strain>
    </source>
</reference>
<reference evidence="5" key="2">
    <citation type="journal article" date="2012" name="Cell">
        <title>HSF-1 regulators DDL-1/2 link insulin-like signaling to heat-shock responses and modulation of longevity.</title>
        <authorList>
            <person name="Chiang W.C."/>
            <person name="Ching T.T."/>
            <person name="Lee H.C."/>
            <person name="Mousigian C."/>
            <person name="Hsu A.L."/>
        </authorList>
    </citation>
    <scope>FUNCTION</scope>
    <scope>IDENTIFICATION IN THE DHIC COMPLEX</scope>
    <scope>INTERACTION WITH DDL-1</scope>
    <scope>TISSUE SPECIFICITY</scope>
    <scope>DISRUPTION PHENOTYPE</scope>
</reference>
<organism evidence="6">
    <name type="scientific">Caenorhabditis elegans</name>
    <dbReference type="NCBI Taxonomy" id="6239"/>
    <lineage>
        <taxon>Eukaryota</taxon>
        <taxon>Metazoa</taxon>
        <taxon>Ecdysozoa</taxon>
        <taxon>Nematoda</taxon>
        <taxon>Chromadorea</taxon>
        <taxon>Rhabditida</taxon>
        <taxon>Rhabditina</taxon>
        <taxon>Rhabditomorpha</taxon>
        <taxon>Rhabditoidea</taxon>
        <taxon>Rhabditidae</taxon>
        <taxon>Peloderinae</taxon>
        <taxon>Caenorhabditis</taxon>
    </lineage>
</organism>
<name>WASH1_CAEEL</name>